<gene>
    <name evidence="1" type="primary">menD</name>
    <name type="ordered locus">HS_0617</name>
</gene>
<dbReference type="EC" id="2.2.1.9" evidence="1"/>
<dbReference type="EMBL" id="CP000436">
    <property type="protein sequence ID" value="ABI24894.1"/>
    <property type="molecule type" value="Genomic_DNA"/>
</dbReference>
<dbReference type="SMR" id="Q0I316"/>
<dbReference type="KEGG" id="hso:HS_0617"/>
<dbReference type="eggNOG" id="COG1165">
    <property type="taxonomic scope" value="Bacteria"/>
</dbReference>
<dbReference type="HOGENOM" id="CLU_006051_3_0_6"/>
<dbReference type="UniPathway" id="UPA00079"/>
<dbReference type="UniPathway" id="UPA01057">
    <property type="reaction ID" value="UER00164"/>
</dbReference>
<dbReference type="GO" id="GO:0070204">
    <property type="term" value="F:2-succinyl-5-enolpyruvyl-6-hydroxy-3-cyclohexene-1-carboxylic-acid synthase activity"/>
    <property type="evidence" value="ECO:0007669"/>
    <property type="project" value="UniProtKB-UniRule"/>
</dbReference>
<dbReference type="GO" id="GO:0000287">
    <property type="term" value="F:magnesium ion binding"/>
    <property type="evidence" value="ECO:0007669"/>
    <property type="project" value="UniProtKB-UniRule"/>
</dbReference>
<dbReference type="GO" id="GO:0030145">
    <property type="term" value="F:manganese ion binding"/>
    <property type="evidence" value="ECO:0007669"/>
    <property type="project" value="UniProtKB-UniRule"/>
</dbReference>
<dbReference type="GO" id="GO:0030976">
    <property type="term" value="F:thiamine pyrophosphate binding"/>
    <property type="evidence" value="ECO:0007669"/>
    <property type="project" value="UniProtKB-UniRule"/>
</dbReference>
<dbReference type="GO" id="GO:0009234">
    <property type="term" value="P:menaquinone biosynthetic process"/>
    <property type="evidence" value="ECO:0007669"/>
    <property type="project" value="UniProtKB-UniRule"/>
</dbReference>
<dbReference type="CDD" id="cd07037">
    <property type="entry name" value="TPP_PYR_MenD"/>
    <property type="match status" value="1"/>
</dbReference>
<dbReference type="CDD" id="cd02009">
    <property type="entry name" value="TPP_SHCHC_synthase"/>
    <property type="match status" value="1"/>
</dbReference>
<dbReference type="Gene3D" id="3.40.50.970">
    <property type="match status" value="2"/>
</dbReference>
<dbReference type="Gene3D" id="3.40.50.1220">
    <property type="entry name" value="TPP-binding domain"/>
    <property type="match status" value="1"/>
</dbReference>
<dbReference type="HAMAP" id="MF_01659">
    <property type="entry name" value="MenD"/>
    <property type="match status" value="1"/>
</dbReference>
<dbReference type="InterPro" id="IPR004433">
    <property type="entry name" value="MenaQ_synth_MenD"/>
</dbReference>
<dbReference type="InterPro" id="IPR032264">
    <property type="entry name" value="MenD_middle"/>
</dbReference>
<dbReference type="InterPro" id="IPR029061">
    <property type="entry name" value="THDP-binding"/>
</dbReference>
<dbReference type="InterPro" id="IPR012001">
    <property type="entry name" value="Thiamin_PyroP_enz_TPP-bd_dom"/>
</dbReference>
<dbReference type="InterPro" id="IPR011766">
    <property type="entry name" value="TPP_enzyme_TPP-bd"/>
</dbReference>
<dbReference type="NCBIfam" id="TIGR00173">
    <property type="entry name" value="menD"/>
    <property type="match status" value="1"/>
</dbReference>
<dbReference type="PANTHER" id="PTHR42916">
    <property type="entry name" value="2-SUCCINYL-5-ENOLPYRUVYL-6-HYDROXY-3-CYCLOHEXENE-1-CARBOXYLATE SYNTHASE"/>
    <property type="match status" value="1"/>
</dbReference>
<dbReference type="PANTHER" id="PTHR42916:SF1">
    <property type="entry name" value="PROTEIN PHYLLO, CHLOROPLASTIC"/>
    <property type="match status" value="1"/>
</dbReference>
<dbReference type="Pfam" id="PF02775">
    <property type="entry name" value="TPP_enzyme_C"/>
    <property type="match status" value="1"/>
</dbReference>
<dbReference type="Pfam" id="PF16582">
    <property type="entry name" value="TPP_enzyme_M_2"/>
    <property type="match status" value="1"/>
</dbReference>
<dbReference type="Pfam" id="PF02776">
    <property type="entry name" value="TPP_enzyme_N"/>
    <property type="match status" value="1"/>
</dbReference>
<dbReference type="PIRSF" id="PIRSF004983">
    <property type="entry name" value="MenD"/>
    <property type="match status" value="1"/>
</dbReference>
<dbReference type="SUPFAM" id="SSF52518">
    <property type="entry name" value="Thiamin diphosphate-binding fold (THDP-binding)"/>
    <property type="match status" value="2"/>
</dbReference>
<sequence>MSASVFNRCWSKVILETLSRQGVSHFCIAPGSRSTPLTLEAIRLQENGRGTCHAHFDERSLGFFALGIAKASKKPVAVIVTSGTATANLYPAIIEARQTDVPLIILTADRPPELLECGANQAILQQNMFAQYPIASINLPRPSQNYSAQWLISVLDQACFRQKQGGVIHINVPFAEPLYNANNDEIDLHPWLSNIQSWLTQNKNWIQHQEQHTEVITHKYWDQWRTKKGIIIVGRLPSEQAMGIAEWADNMGWIMITDIQSHVKPTLPYADIWLANQTVRKKLLQAEIVIQFGSGFIGKRINQFLAEFKGEYWIIENNQKAVDPYHHAHTRFNAKPHHWLRAHPPMRKKPWLLEPLALAKFCADFIKQRVGSNLNEASLAHNIELLLPKSNSVLFLGNSLFVRLADALSQPSANYPIYTNRGASGIDGLLATAAGIAVGSEQTLVAMIGDTSTLYDLNSFALFKQLNQPAIIFVINNNGGAIFDMLPVDIAVKEKYYRMSHYLEFSHIAAMFDLKYARPYTWADLATVLKQAYSRRETTVIEIKVNPNDGSNIYKDLIDKIGHALIGV</sequence>
<proteinExistence type="inferred from homology"/>
<organism>
    <name type="scientific">Histophilus somni (strain 129Pt)</name>
    <name type="common">Haemophilus somnus</name>
    <dbReference type="NCBI Taxonomy" id="205914"/>
    <lineage>
        <taxon>Bacteria</taxon>
        <taxon>Pseudomonadati</taxon>
        <taxon>Pseudomonadota</taxon>
        <taxon>Gammaproteobacteria</taxon>
        <taxon>Pasteurellales</taxon>
        <taxon>Pasteurellaceae</taxon>
        <taxon>Histophilus</taxon>
    </lineage>
</organism>
<evidence type="ECO:0000255" key="1">
    <source>
        <dbReference type="HAMAP-Rule" id="MF_01659"/>
    </source>
</evidence>
<keyword id="KW-0460">Magnesium</keyword>
<keyword id="KW-0464">Manganese</keyword>
<keyword id="KW-0474">Menaquinone biosynthesis</keyword>
<keyword id="KW-0479">Metal-binding</keyword>
<keyword id="KW-0786">Thiamine pyrophosphate</keyword>
<keyword id="KW-0808">Transferase</keyword>
<reference key="1">
    <citation type="journal article" date="2007" name="J. Bacteriol.">
        <title>Complete genome sequence of Haemophilus somnus (Histophilus somni) strain 129Pt and comparison to Haemophilus ducreyi 35000HP and Haemophilus influenzae Rd.</title>
        <authorList>
            <person name="Challacombe J.F."/>
            <person name="Duncan A.J."/>
            <person name="Brettin T.S."/>
            <person name="Bruce D."/>
            <person name="Chertkov O."/>
            <person name="Detter J.C."/>
            <person name="Han C.S."/>
            <person name="Misra M."/>
            <person name="Richardson P."/>
            <person name="Tapia R."/>
            <person name="Thayer N."/>
            <person name="Xie G."/>
            <person name="Inzana T.J."/>
        </authorList>
    </citation>
    <scope>NUCLEOTIDE SEQUENCE [LARGE SCALE GENOMIC DNA]</scope>
    <source>
        <strain>129Pt</strain>
    </source>
</reference>
<accession>Q0I316</accession>
<protein>
    <recommendedName>
        <fullName evidence="1">2-succinyl-5-enolpyruvyl-6-hydroxy-3-cyclohexene-1-carboxylate synthase</fullName>
        <shortName evidence="1">SEPHCHC synthase</shortName>
        <ecNumber evidence="1">2.2.1.9</ecNumber>
    </recommendedName>
    <alternativeName>
        <fullName evidence="1">Menaquinone biosynthesis protein MenD</fullName>
    </alternativeName>
</protein>
<name>MEND_HISS1</name>
<feature type="chain" id="PRO_0000341756" description="2-succinyl-5-enolpyruvyl-6-hydroxy-3-cyclohexene-1-carboxylate synthase">
    <location>
        <begin position="1"/>
        <end position="568"/>
    </location>
</feature>
<comment type="function">
    <text evidence="1">Catalyzes the thiamine diphosphate-dependent decarboxylation of 2-oxoglutarate and the subsequent addition of the resulting succinic semialdehyde-thiamine pyrophosphate anion to isochorismate to yield 2-succinyl-5-enolpyruvyl-6-hydroxy-3-cyclohexene-1-carboxylate (SEPHCHC).</text>
</comment>
<comment type="catalytic activity">
    <reaction evidence="1">
        <text>isochorismate + 2-oxoglutarate + H(+) = 5-enolpyruvoyl-6-hydroxy-2-succinyl-cyclohex-3-ene-1-carboxylate + CO2</text>
        <dbReference type="Rhea" id="RHEA:25593"/>
        <dbReference type="ChEBI" id="CHEBI:15378"/>
        <dbReference type="ChEBI" id="CHEBI:16526"/>
        <dbReference type="ChEBI" id="CHEBI:16810"/>
        <dbReference type="ChEBI" id="CHEBI:29780"/>
        <dbReference type="ChEBI" id="CHEBI:58818"/>
        <dbReference type="EC" id="2.2.1.9"/>
    </reaction>
</comment>
<comment type="cofactor">
    <cofactor evidence="1">
        <name>Mg(2+)</name>
        <dbReference type="ChEBI" id="CHEBI:18420"/>
    </cofactor>
    <cofactor evidence="1">
        <name>Mn(2+)</name>
        <dbReference type="ChEBI" id="CHEBI:29035"/>
    </cofactor>
</comment>
<comment type="cofactor">
    <cofactor evidence="1">
        <name>thiamine diphosphate</name>
        <dbReference type="ChEBI" id="CHEBI:58937"/>
    </cofactor>
    <text evidence="1">Binds 1 thiamine pyrophosphate per subunit.</text>
</comment>
<comment type="pathway">
    <text evidence="1">Quinol/quinone metabolism; 1,4-dihydroxy-2-naphthoate biosynthesis; 1,4-dihydroxy-2-naphthoate from chorismate: step 2/7.</text>
</comment>
<comment type="pathway">
    <text evidence="1">Quinol/quinone metabolism; menaquinone biosynthesis.</text>
</comment>
<comment type="subunit">
    <text evidence="1">Homodimer.</text>
</comment>
<comment type="similarity">
    <text evidence="1">Belongs to the TPP enzyme family. MenD subfamily.</text>
</comment>